<comment type="function">
    <text evidence="1 7">Functions as a two-component phosphorelay mediators between cytokinin sensor histidine kinases and response regulators (B-type ARRs). Plays an important role in propagating cytokinin signal transduction through the multistep His-to-Asp phosphorelay (By similarity). Functions as a positive regulator of the cytokinin signaling pathway. May play a regulatory role in salt and drought tolerance during plant development (PubMed:24578505).</text>
</comment>
<comment type="subcellular location">
    <subcellularLocation>
        <location evidence="6 7">Cytoplasm</location>
        <location evidence="6 7">Cytosol</location>
    </subcellularLocation>
    <subcellularLocation>
        <location evidence="6 7">Nucleus</location>
    </subcellularLocation>
</comment>
<comment type="tissue specificity">
    <text evidence="4 5">Widely expressed.</text>
</comment>
<comment type="domain">
    <text evidence="12">Histidine-containing phosphotransfer domain (HPt) contains an active histidine that mediates the phosphotransfer.</text>
</comment>
<comment type="PTM">
    <text evidence="12">Two-component system major event consists of a His-to-Asp phosphorelay between a sensor histidine kinase (HK) and a response regulator (RR). In plants, the His-to-Asp phosphorelay involves an additional intermediate named Histidine-containing phosphotransfer protein (HPt). This multistep phosphorelay consists of a His-Asp-His-Asp sequential transfer of a phosphate group between first a His and an Asp of the HK protein, followed by the transfer to a conserved His of the HPt protein and finally the transfer to an Asp in the receiver domain of the RR protein.</text>
</comment>
<comment type="disruption phenotype">
    <text evidence="3">Dwarf, narrow leaf, small grain and low fertility phenotypes.</text>
</comment>
<comment type="miscellaneous">
    <text evidence="7">Plant silencing simultaneously OHP1 and OHP2 exhibit phenotypes for a deficiency in cytokinin signaling, including dwarfism with reduced internode lengths, enhanced lateral root growth, early leaf senescence, and reduced tiller numbers and fertility.</text>
</comment>
<protein>
    <recommendedName>
        <fullName evidence="12">Histidine-containing phosphotransfer protein 2</fullName>
    </recommendedName>
    <alternativeName>
        <fullName evidence="11">OsAHP2</fullName>
    </alternativeName>
    <alternativeName>
        <fullName evidence="13">OsHP1</fullName>
    </alternativeName>
    <alternativeName>
        <fullName evidence="8">OsHpt3</fullName>
    </alternativeName>
</protein>
<gene>
    <name evidence="10" type="primary">AHP2</name>
    <name evidence="13" type="synonym">HP1</name>
    <name evidence="9" type="synonym">OHP2</name>
    <name evidence="15" type="ordered locus">Os09g0567400</name>
    <name evidence="12" type="ordered locus">LOC_Os09g39400</name>
    <name evidence="14" type="ORF">OJ1155_H10.30</name>
</gene>
<sequence length="149" mass="16811">MAAAALRDQLTALLSSMFSQGLVDEQFQQLQMLQDEGGTPGFVSEVVTLFCDDADRIINEIATLLEQPVVNFDKVDAYVHQLKGSSASVGAQKVKFTCMQFRQFCQDKSRDGCLMALAVVRNDFYDLRNKFQTMLQLEQQIQAYDPKQQ</sequence>
<proteinExistence type="evidence at protein level"/>
<organism>
    <name type="scientific">Oryza sativa subsp. japonica</name>
    <name type="common">Rice</name>
    <dbReference type="NCBI Taxonomy" id="39947"/>
    <lineage>
        <taxon>Eukaryota</taxon>
        <taxon>Viridiplantae</taxon>
        <taxon>Streptophyta</taxon>
        <taxon>Embryophyta</taxon>
        <taxon>Tracheophyta</taxon>
        <taxon>Spermatophyta</taxon>
        <taxon>Magnoliopsida</taxon>
        <taxon>Liliopsida</taxon>
        <taxon>Poales</taxon>
        <taxon>Poaceae</taxon>
        <taxon>BOP clade</taxon>
        <taxon>Oryzoideae</taxon>
        <taxon>Oryzeae</taxon>
        <taxon>Oryzinae</taxon>
        <taxon>Oryza</taxon>
        <taxon>Oryza sativa</taxon>
    </lineage>
</organism>
<evidence type="ECO:0000250" key="1">
    <source>
        <dbReference type="UniProtKB" id="Q8L9T7"/>
    </source>
</evidence>
<evidence type="ECO:0000255" key="2">
    <source>
        <dbReference type="PROSITE-ProRule" id="PRU00110"/>
    </source>
</evidence>
<evidence type="ECO:0000269" key="3">
    <source>
    </source>
</evidence>
<evidence type="ECO:0000269" key="4">
    <source>
    </source>
</evidence>
<evidence type="ECO:0000269" key="5">
    <source>
    </source>
</evidence>
<evidence type="ECO:0000269" key="6">
    <source>
    </source>
</evidence>
<evidence type="ECO:0000269" key="7">
    <source>
    </source>
</evidence>
<evidence type="ECO:0000303" key="8">
    <source>
    </source>
</evidence>
<evidence type="ECO:0000303" key="9">
    <source>
    </source>
</evidence>
<evidence type="ECO:0000303" key="10">
    <source>
    </source>
</evidence>
<evidence type="ECO:0000303" key="11">
    <source>
    </source>
</evidence>
<evidence type="ECO:0000305" key="12"/>
<evidence type="ECO:0000312" key="13">
    <source>
        <dbReference type="EMBL" id="AAQ24029.1"/>
    </source>
</evidence>
<evidence type="ECO:0000312" key="14">
    <source>
        <dbReference type="EMBL" id="BAD46253.1"/>
    </source>
</evidence>
<evidence type="ECO:0000312" key="15">
    <source>
        <dbReference type="EMBL" id="BAF25875.1"/>
    </source>
</evidence>
<evidence type="ECO:0007829" key="16">
    <source>
        <dbReference type="PDB" id="1YVI"/>
    </source>
</evidence>
<accession>Q6VAK4</accession>
<accession>A0A0P0XRE0</accession>
<accession>Q0IZJ0</accession>
<feature type="chain" id="PRO_0000247615" description="Histidine-containing phosphotransfer protein 2">
    <location>
        <begin position="1"/>
        <end position="149"/>
    </location>
</feature>
<feature type="domain" description="HPt" evidence="2">
    <location>
        <begin position="39"/>
        <end position="144"/>
    </location>
</feature>
<feature type="modified residue" description="Phosphohistidine" evidence="2">
    <location>
        <position position="80"/>
    </location>
</feature>
<feature type="helix" evidence="16">
    <location>
        <begin position="2"/>
        <end position="19"/>
    </location>
</feature>
<feature type="helix" evidence="16">
    <location>
        <begin position="25"/>
        <end position="34"/>
    </location>
</feature>
<feature type="helix" evidence="16">
    <location>
        <begin position="42"/>
        <end position="65"/>
    </location>
</feature>
<feature type="strand" evidence="16">
    <location>
        <begin position="67"/>
        <end position="69"/>
    </location>
</feature>
<feature type="helix" evidence="16">
    <location>
        <begin position="72"/>
        <end position="89"/>
    </location>
</feature>
<feature type="helix" evidence="16">
    <location>
        <begin position="92"/>
        <end position="106"/>
    </location>
</feature>
<feature type="helix" evidence="16">
    <location>
        <begin position="110"/>
        <end position="142"/>
    </location>
</feature>
<dbReference type="EMBL" id="BR000249">
    <property type="protein sequence ID" value="FAA00253.1"/>
    <property type="molecule type" value="Genomic_DNA"/>
</dbReference>
<dbReference type="EMBL" id="AY345241">
    <property type="protein sequence ID" value="AAQ24029.1"/>
    <property type="molecule type" value="mRNA"/>
</dbReference>
<dbReference type="EMBL" id="AP005558">
    <property type="protein sequence ID" value="BAD46253.1"/>
    <property type="molecule type" value="Genomic_DNA"/>
</dbReference>
<dbReference type="EMBL" id="AP008215">
    <property type="protein sequence ID" value="BAF25875.1"/>
    <property type="molecule type" value="Genomic_DNA"/>
</dbReference>
<dbReference type="EMBL" id="AP014965">
    <property type="protein sequence ID" value="BAT09475.1"/>
    <property type="molecule type" value="Genomic_DNA"/>
</dbReference>
<dbReference type="EMBL" id="CM000146">
    <property type="protein sequence ID" value="EEE70257.1"/>
    <property type="molecule type" value="Genomic_DNA"/>
</dbReference>
<dbReference type="RefSeq" id="XP_015611768.1">
    <property type="nucleotide sequence ID" value="XM_015756282.1"/>
</dbReference>
<dbReference type="PDB" id="1YVI">
    <property type="method" value="X-ray"/>
    <property type="resolution" value="2.00 A"/>
    <property type="chains" value="A/B=2-149"/>
</dbReference>
<dbReference type="PDB" id="2Q4F">
    <property type="method" value="X-ray"/>
    <property type="resolution" value="2.00 A"/>
    <property type="chains" value="A/B=2-149"/>
</dbReference>
<dbReference type="PDBsum" id="1YVI"/>
<dbReference type="PDBsum" id="2Q4F"/>
<dbReference type="SMR" id="Q6VAK4"/>
<dbReference type="FunCoup" id="Q6VAK4">
    <property type="interactions" value="27"/>
</dbReference>
<dbReference type="STRING" id="39947.Q6VAK4"/>
<dbReference type="PaxDb" id="39947-Q6VAK4"/>
<dbReference type="EnsemblPlants" id="Os09t0567400-01">
    <property type="protein sequence ID" value="Os09t0567400-01"/>
    <property type="gene ID" value="Os09g0567400"/>
</dbReference>
<dbReference type="EnsemblPlants" id="Os09t0567400-02">
    <property type="protein sequence ID" value="Os09t0567400-02"/>
    <property type="gene ID" value="Os09g0567400"/>
</dbReference>
<dbReference type="Gramene" id="Os09t0567400-01">
    <property type="protein sequence ID" value="Os09t0567400-01"/>
    <property type="gene ID" value="Os09g0567400"/>
</dbReference>
<dbReference type="Gramene" id="Os09t0567400-02">
    <property type="protein sequence ID" value="Os09t0567400-02"/>
    <property type="gene ID" value="Os09g0567400"/>
</dbReference>
<dbReference type="KEGG" id="dosa:Os09g0567400"/>
<dbReference type="eggNOG" id="KOG4747">
    <property type="taxonomic scope" value="Eukaryota"/>
</dbReference>
<dbReference type="HOGENOM" id="CLU_111777_3_0_1"/>
<dbReference type="InParanoid" id="Q6VAK4"/>
<dbReference type="OMA" id="NMFTTGM"/>
<dbReference type="OrthoDB" id="1673781at2759"/>
<dbReference type="EvolutionaryTrace" id="Q6VAK4"/>
<dbReference type="Proteomes" id="UP000000763">
    <property type="component" value="Chromosome 9"/>
</dbReference>
<dbReference type="Proteomes" id="UP000007752">
    <property type="component" value="Chromosome 9"/>
</dbReference>
<dbReference type="Proteomes" id="UP000059680">
    <property type="component" value="Chromosome 9"/>
</dbReference>
<dbReference type="GO" id="GO:0005737">
    <property type="term" value="C:cytoplasm"/>
    <property type="evidence" value="ECO:0000318"/>
    <property type="project" value="GO_Central"/>
</dbReference>
<dbReference type="GO" id="GO:0005829">
    <property type="term" value="C:cytosol"/>
    <property type="evidence" value="ECO:0000314"/>
    <property type="project" value="UniProtKB"/>
</dbReference>
<dbReference type="GO" id="GO:0005634">
    <property type="term" value="C:nucleus"/>
    <property type="evidence" value="ECO:0000314"/>
    <property type="project" value="UniProtKB"/>
</dbReference>
<dbReference type="GO" id="GO:0009927">
    <property type="term" value="F:histidine phosphotransfer kinase activity"/>
    <property type="evidence" value="ECO:0000318"/>
    <property type="project" value="GO_Central"/>
</dbReference>
<dbReference type="GO" id="GO:0043424">
    <property type="term" value="F:protein histidine kinase binding"/>
    <property type="evidence" value="ECO:0000318"/>
    <property type="project" value="GO_Central"/>
</dbReference>
<dbReference type="GO" id="GO:0009736">
    <property type="term" value="P:cytokinin-activated signaling pathway"/>
    <property type="evidence" value="ECO:0000318"/>
    <property type="project" value="GO_Central"/>
</dbReference>
<dbReference type="GO" id="GO:0000160">
    <property type="term" value="P:phosphorelay signal transduction system"/>
    <property type="evidence" value="ECO:0000318"/>
    <property type="project" value="GO_Central"/>
</dbReference>
<dbReference type="GO" id="GO:0080038">
    <property type="term" value="P:positive regulation of cytokinin-activated signaling pathway"/>
    <property type="evidence" value="ECO:0000315"/>
    <property type="project" value="UniProtKB"/>
</dbReference>
<dbReference type="CDD" id="cd00088">
    <property type="entry name" value="HPT"/>
    <property type="match status" value="1"/>
</dbReference>
<dbReference type="FunFam" id="1.20.120.160:FF:000001">
    <property type="entry name" value="Histidine-containing phosphotransfer protein 1"/>
    <property type="match status" value="1"/>
</dbReference>
<dbReference type="Gene3D" id="1.20.120.160">
    <property type="entry name" value="HPT domain"/>
    <property type="match status" value="1"/>
</dbReference>
<dbReference type="InterPro" id="IPR045871">
    <property type="entry name" value="AHP1-5/YPD1"/>
</dbReference>
<dbReference type="InterPro" id="IPR036641">
    <property type="entry name" value="HPT_dom_sf"/>
</dbReference>
<dbReference type="InterPro" id="IPR008207">
    <property type="entry name" value="Sig_transdc_His_kin_Hpt_dom"/>
</dbReference>
<dbReference type="PANTHER" id="PTHR28242:SF30">
    <property type="entry name" value="HISTIDINE-CONTAINING PHOSPHOTRANSFER PROTEIN 2"/>
    <property type="match status" value="1"/>
</dbReference>
<dbReference type="PANTHER" id="PTHR28242">
    <property type="entry name" value="PHOSPHORELAY INTERMEDIATE PROTEIN YPD1"/>
    <property type="match status" value="1"/>
</dbReference>
<dbReference type="Pfam" id="PF01627">
    <property type="entry name" value="Hpt"/>
    <property type="match status" value="1"/>
</dbReference>
<dbReference type="SUPFAM" id="SSF47226">
    <property type="entry name" value="Histidine-containing phosphotransfer domain, HPT domain"/>
    <property type="match status" value="1"/>
</dbReference>
<dbReference type="PROSITE" id="PS50894">
    <property type="entry name" value="HPT"/>
    <property type="match status" value="1"/>
</dbReference>
<name>OHP2_ORYSJ</name>
<keyword id="KW-0002">3D-structure</keyword>
<keyword id="KW-0932">Cytokinin signaling pathway</keyword>
<keyword id="KW-0963">Cytoplasm</keyword>
<keyword id="KW-0539">Nucleus</keyword>
<keyword id="KW-0597">Phosphoprotein</keyword>
<keyword id="KW-1185">Reference proteome</keyword>
<keyword id="KW-0716">Sensory transduction</keyword>
<keyword id="KW-0902">Two-component regulatory system</keyword>
<reference key="1">
    <citation type="journal article" date="2006" name="Gene">
        <title>Identification and characterization of cytokinin-signalling gene families in rice.</title>
        <authorList>
            <person name="Ito Y."/>
            <person name="Kurata N."/>
        </authorList>
    </citation>
    <scope>NUCLEOTIDE SEQUENCE [GENOMIC DNA]</scope>
    <scope>TISSUE SPECIFICITY</scope>
    <source>
        <strain>cv. Nipponbare</strain>
    </source>
</reference>
<reference key="2">
    <citation type="submission" date="2003-07" db="EMBL/GenBank/DDBJ databases">
        <title>Characterization of genes for two-component phosphorelay mediators with a single HPt domain in Oryza sativa.</title>
        <authorList>
            <person name="Gu Z.M."/>
            <person name="Zhang H.S."/>
            <person name="Huang J."/>
        </authorList>
    </citation>
    <scope>NUCLEOTIDE SEQUENCE [MRNA]</scope>
</reference>
<reference key="3">
    <citation type="journal article" date="2005" name="Nature">
        <title>The map-based sequence of the rice genome.</title>
        <authorList>
            <consortium name="International rice genome sequencing project (IRGSP)"/>
        </authorList>
    </citation>
    <scope>NUCLEOTIDE SEQUENCE [LARGE SCALE GENOMIC DNA]</scope>
    <source>
        <strain>cv. Nipponbare</strain>
    </source>
</reference>
<reference key="4">
    <citation type="journal article" date="2013" name="Rice">
        <title>Improvement of the Oryza sativa Nipponbare reference genome using next generation sequence and optical map data.</title>
        <authorList>
            <person name="Kawahara Y."/>
            <person name="de la Bastide M."/>
            <person name="Hamilton J.P."/>
            <person name="Kanamori H."/>
            <person name="McCombie W.R."/>
            <person name="Ouyang S."/>
            <person name="Schwartz D.C."/>
            <person name="Tanaka T."/>
            <person name="Wu J."/>
            <person name="Zhou S."/>
            <person name="Childs K.L."/>
            <person name="Davidson R.M."/>
            <person name="Lin H."/>
            <person name="Quesada-Ocampo L."/>
            <person name="Vaillancourt B."/>
            <person name="Sakai H."/>
            <person name="Lee S.S."/>
            <person name="Kim J."/>
            <person name="Numa H."/>
            <person name="Itoh T."/>
            <person name="Buell C.R."/>
            <person name="Matsumoto T."/>
        </authorList>
    </citation>
    <scope>GENOME REANNOTATION</scope>
    <source>
        <strain>cv. Nipponbare</strain>
    </source>
</reference>
<reference key="5">
    <citation type="journal article" date="2005" name="PLoS Biol.">
        <title>The genomes of Oryza sativa: a history of duplications.</title>
        <authorList>
            <person name="Yu J."/>
            <person name="Wang J."/>
            <person name="Lin W."/>
            <person name="Li S."/>
            <person name="Li H."/>
            <person name="Zhou J."/>
            <person name="Ni P."/>
            <person name="Dong W."/>
            <person name="Hu S."/>
            <person name="Zeng C."/>
            <person name="Zhang J."/>
            <person name="Zhang Y."/>
            <person name="Li R."/>
            <person name="Xu Z."/>
            <person name="Li S."/>
            <person name="Li X."/>
            <person name="Zheng H."/>
            <person name="Cong L."/>
            <person name="Lin L."/>
            <person name="Yin J."/>
            <person name="Geng J."/>
            <person name="Li G."/>
            <person name="Shi J."/>
            <person name="Liu J."/>
            <person name="Lv H."/>
            <person name="Li J."/>
            <person name="Wang J."/>
            <person name="Deng Y."/>
            <person name="Ran L."/>
            <person name="Shi X."/>
            <person name="Wang X."/>
            <person name="Wu Q."/>
            <person name="Li C."/>
            <person name="Ren X."/>
            <person name="Wang J."/>
            <person name="Wang X."/>
            <person name="Li D."/>
            <person name="Liu D."/>
            <person name="Zhang X."/>
            <person name="Ji Z."/>
            <person name="Zhao W."/>
            <person name="Sun Y."/>
            <person name="Zhang Z."/>
            <person name="Bao J."/>
            <person name="Han Y."/>
            <person name="Dong L."/>
            <person name="Ji J."/>
            <person name="Chen P."/>
            <person name="Wu S."/>
            <person name="Liu J."/>
            <person name="Xiao Y."/>
            <person name="Bu D."/>
            <person name="Tan J."/>
            <person name="Yang L."/>
            <person name="Ye C."/>
            <person name="Zhang J."/>
            <person name="Xu J."/>
            <person name="Zhou Y."/>
            <person name="Yu Y."/>
            <person name="Zhang B."/>
            <person name="Zhuang S."/>
            <person name="Wei H."/>
            <person name="Liu B."/>
            <person name="Lei M."/>
            <person name="Yu H."/>
            <person name="Li Y."/>
            <person name="Xu H."/>
            <person name="Wei S."/>
            <person name="He X."/>
            <person name="Fang L."/>
            <person name="Zhang Z."/>
            <person name="Zhang Y."/>
            <person name="Huang X."/>
            <person name="Su Z."/>
            <person name="Tong W."/>
            <person name="Li J."/>
            <person name="Tong Z."/>
            <person name="Li S."/>
            <person name="Ye J."/>
            <person name="Wang L."/>
            <person name="Fang L."/>
            <person name="Lei T."/>
            <person name="Chen C.-S."/>
            <person name="Chen H.-C."/>
            <person name="Xu Z."/>
            <person name="Li H."/>
            <person name="Huang H."/>
            <person name="Zhang F."/>
            <person name="Xu H."/>
            <person name="Li N."/>
            <person name="Zhao C."/>
            <person name="Li S."/>
            <person name="Dong L."/>
            <person name="Huang Y."/>
            <person name="Li L."/>
            <person name="Xi Y."/>
            <person name="Qi Q."/>
            <person name="Li W."/>
            <person name="Zhang B."/>
            <person name="Hu W."/>
            <person name="Zhang Y."/>
            <person name="Tian X."/>
            <person name="Jiao Y."/>
            <person name="Liang X."/>
            <person name="Jin J."/>
            <person name="Gao L."/>
            <person name="Zheng W."/>
            <person name="Hao B."/>
            <person name="Liu S.-M."/>
            <person name="Wang W."/>
            <person name="Yuan L."/>
            <person name="Cao M."/>
            <person name="McDermott J."/>
            <person name="Samudrala R."/>
            <person name="Wang J."/>
            <person name="Wong G.K.-S."/>
            <person name="Yang H."/>
        </authorList>
    </citation>
    <scope>NUCLEOTIDE SEQUENCE [LARGE SCALE GENOMIC DNA]</scope>
    <source>
        <strain>cv. Nipponbare</strain>
    </source>
</reference>
<reference key="6">
    <citation type="journal article" date="2006" name="Plant Physiol.">
        <title>Whole-genome analysis of Oryza sativa reveals similar architecture of two-component signaling machinery with Arabidopsis.</title>
        <authorList>
            <person name="Pareek A."/>
            <person name="Singh A."/>
            <person name="Kumar M."/>
            <person name="Kushwaha H.R."/>
            <person name="Lynn A.M."/>
            <person name="Singla-Pareek S.L."/>
        </authorList>
    </citation>
    <scope>DISRUPTION PHENOTYPE</scope>
</reference>
<reference key="7">
    <citation type="journal article" date="2007" name="Genomics">
        <title>The two-component signal system in rice (Oryza sativa L.): a genome-wide study of cytokinin signal perception and transduction.</title>
        <authorList>
            <person name="Du L."/>
            <person name="Jiao F."/>
            <person name="Chu J."/>
            <person name="Jin G."/>
            <person name="Chen M."/>
            <person name="Wu P."/>
        </authorList>
    </citation>
    <scope>TISSUE SPECIFICITY</scope>
</reference>
<reference key="8">
    <citation type="journal article" date="2007" name="Plant Physiol.">
        <title>Nomenclature for two-component signaling elements of rice.</title>
        <authorList>
            <person name="Schaller G.E."/>
            <person name="Doi K."/>
            <person name="Hwang I."/>
            <person name="Kieber J.J."/>
            <person name="Khurana J.P."/>
            <person name="Kurata N."/>
            <person name="Mizuno T."/>
            <person name="Pareek A."/>
            <person name="Shiu S.H."/>
            <person name="Wu P."/>
            <person name="Yip W.K."/>
        </authorList>
    </citation>
    <scope>GENE FAMILY</scope>
    <scope>NOMENCLATURE</scope>
</reference>
<reference key="9">
    <citation type="journal article" date="2012" name="Plant Physiol.">
        <title>Characterization of genes involved in cytokinin signaling and metabolism from rice.</title>
        <authorList>
            <person name="Tsai Y.C."/>
            <person name="Weir N.R."/>
            <person name="Hill K."/>
            <person name="Zhang W."/>
            <person name="Kim H.J."/>
            <person name="Shiu S.H."/>
            <person name="Schaller G.E."/>
            <person name="Kieber J.J."/>
        </authorList>
    </citation>
    <scope>SUBCELLULAR LOCATION</scope>
</reference>
<reference key="10">
    <citation type="journal article" date="2014" name="Plant Physiol.">
        <title>Two rice authentic histidine phosphotransfer proteins, OsAHP1 and OsAHP2, mediate cytokinin signaling and stress responses in rice.</title>
        <authorList>
            <person name="Sun L."/>
            <person name="Zhang Q."/>
            <person name="Wu J."/>
            <person name="Zhang L."/>
            <person name="Jiao X."/>
            <person name="Zhang S."/>
            <person name="Zhang Z."/>
            <person name="Sun D."/>
            <person name="Lu T."/>
            <person name="Sun Y."/>
        </authorList>
    </citation>
    <scope>FUNCTION</scope>
    <scope>SUBCELLULAR LOCATION</scope>
</reference>
<reference key="11">
    <citation type="submission" date="2005-02" db="PDB data bank">
        <title>X-ray structure of putative histidine-containing phosphotransfer protein from rice, AK104879.</title>
        <authorList>
            <consortium name="Center for eukaryotic structural genomics (CESG)"/>
        </authorList>
    </citation>
    <scope>X-RAY CRYSTALLOGRAPHY (2.0 ANGSTROMS) OF 2-149</scope>
</reference>
<reference key="12">
    <citation type="journal article" date="2007" name="Structure">
        <title>Ensemble refinement of protein crystal structures: validation and application.</title>
        <authorList>
            <person name="Levin E.J."/>
            <person name="Kondrashov D.A."/>
            <person name="Wesenberg G.E."/>
            <person name="Phillips G.N. Jr."/>
        </authorList>
    </citation>
    <scope>X-RAY CRYSTALLOGRAPHY (2.00 ANGSTROMS) OF 2-149</scope>
</reference>